<gene>
    <name type="primary">Unc5a</name>
    <name evidence="15 16 17" type="synonym">Unc5h1</name>
</gene>
<evidence type="ECO:0000250" key="1"/>
<evidence type="ECO:0000250" key="2">
    <source>
        <dbReference type="UniProtKB" id="Q6ZN44"/>
    </source>
</evidence>
<evidence type="ECO:0000250" key="3">
    <source>
        <dbReference type="UniProtKB" id="Q8K1S4"/>
    </source>
</evidence>
<evidence type="ECO:0000255" key="4"/>
<evidence type="ECO:0000255" key="5">
    <source>
        <dbReference type="PROSITE-ProRule" id="PRU00210"/>
    </source>
</evidence>
<evidence type="ECO:0000255" key="6">
    <source>
        <dbReference type="PROSITE-ProRule" id="PRU00485"/>
    </source>
</evidence>
<evidence type="ECO:0000269" key="7">
    <source>
    </source>
</evidence>
<evidence type="ECO:0000269" key="8">
    <source>
    </source>
</evidence>
<evidence type="ECO:0000269" key="9">
    <source>
    </source>
</evidence>
<evidence type="ECO:0000269" key="10">
    <source>
    </source>
</evidence>
<evidence type="ECO:0000269" key="11">
    <source>
    </source>
</evidence>
<evidence type="ECO:0000269" key="12">
    <source>
    </source>
</evidence>
<evidence type="ECO:0000269" key="13">
    <source>
    </source>
</evidence>
<evidence type="ECO:0000269" key="14">
    <source>
    </source>
</evidence>
<evidence type="ECO:0000303" key="15">
    <source>
    </source>
</evidence>
<evidence type="ECO:0000303" key="16">
    <source>
    </source>
</evidence>
<evidence type="ECO:0000303" key="17">
    <source>
    </source>
</evidence>
<evidence type="ECO:0000305" key="18"/>
<evidence type="ECO:0000305" key="19">
    <source>
    </source>
</evidence>
<evidence type="ECO:0000305" key="20">
    <source>
    </source>
</evidence>
<keyword id="KW-0053">Apoptosis</keyword>
<keyword id="KW-1003">Cell membrane</keyword>
<keyword id="KW-0966">Cell projection</keyword>
<keyword id="KW-0217">Developmental protein</keyword>
<keyword id="KW-1015">Disulfide bond</keyword>
<keyword id="KW-0325">Glycoprotein</keyword>
<keyword id="KW-0393">Immunoglobulin domain</keyword>
<keyword id="KW-0472">Membrane</keyword>
<keyword id="KW-0597">Phosphoprotein</keyword>
<keyword id="KW-0675">Receptor</keyword>
<keyword id="KW-1185">Reference proteome</keyword>
<keyword id="KW-0677">Repeat</keyword>
<keyword id="KW-0732">Signal</keyword>
<keyword id="KW-0812">Transmembrane</keyword>
<keyword id="KW-1133">Transmembrane helix</keyword>
<sequence length="898" mass="98841">MAVRPGLWPVLLGIVLAAWLRGSGAQQSATVANPVPGANPDLLPHFLVEPEDVYIVKNKPVLLVCKAVPATQIFFKCNGEWVRQVDHVIERSTDSSSGLPTMEVRINVSRQQVEKVFGLEEYWCQCVAWSSSGTTKSQKAYIRIAYLRKNFEQEPLAKEVSLEQGIVLPCRPPEGIPPAEVEWLRNEDLVDPSLDPNVYITREHSLVVRQARLADTANYTCVAKNIVARRRSTSAAVIVYVNGGWSTWTEWSVCSASCGRGWQKRSRSCTNPAPLNGGAFCEGQNVQKTACATLCPVDGSWSSWSKWSACGLDCTHWRSRECSDPAPRNGGEECRGADLDTRNCTSDLCLHTASCPEDVALYIGLVAVAVCLFLLLLALGLIYCRKKEGLDSDVADSSILTSGFQPVSIKPSKADNPHLLTIQPDLSTTTTTYQGSLCSRQDGPSPKFQLSNGHLLSPLGSGRHTLHHSSPTSEAEDFVSRLSTQNYFRSLPRGTSNMAYGTFNFLGGRLMIPNTGISLLIPPDAIPRGKIYEIYLTLHKPEDVRLPLAGCQTLLSPVVSCGPPGVLLTRPVILAMDHCGEPSPDSWSLRLKKQSCEGSWEDVLHLGEESPSHLYYCQLEAGACYVFTEQLGRFALVGEALSVAATKRLRLLLFAPVACTSLEYNIRVYCLHDTHDALKEVVQLEKQLGGQLIQEPRVLHFKDSYHNLRLSIHDVPSSLWKSKLLVSYQEIPFYHIWNGTQQYLHCTFTLERINASTSDLACKVWVWQVEGDGQSFNINFNITKDTRFAELLALESEGGVPALVGPSAFKIPFLIRQKIIASLDPPCSRGADWRTLAQKLHLDSHLSFFASKPSPTAMILNLWEARHFPNGNLGQLAAAVAGLGQPDAGLFTVSEAEC</sequence>
<accession>O08721</accession>
<feature type="signal peptide" evidence="4">
    <location>
        <begin position="1"/>
        <end position="25"/>
    </location>
</feature>
<feature type="chain" id="PRO_0000036070" description="Netrin receptor UNC5A">
    <location>
        <begin position="26"/>
        <end position="898"/>
    </location>
</feature>
<feature type="topological domain" description="Extracellular" evidence="4">
    <location>
        <begin position="26"/>
        <end position="361"/>
    </location>
</feature>
<feature type="transmembrane region" description="Helical" evidence="4">
    <location>
        <begin position="362"/>
        <end position="382"/>
    </location>
</feature>
<feature type="topological domain" description="Cytoplasmic" evidence="4">
    <location>
        <begin position="383"/>
        <end position="898"/>
    </location>
</feature>
<feature type="domain" description="Ig-like">
    <location>
        <begin position="44"/>
        <end position="141"/>
    </location>
</feature>
<feature type="domain" description="Ig-like C2-type">
    <location>
        <begin position="155"/>
        <end position="238"/>
    </location>
</feature>
<feature type="domain" description="TSP type-1 1" evidence="5">
    <location>
        <begin position="242"/>
        <end position="296"/>
    </location>
</feature>
<feature type="domain" description="TSP type-1 2" evidence="5">
    <location>
        <begin position="298"/>
        <end position="350"/>
    </location>
</feature>
<feature type="domain" description="ZU5" evidence="6">
    <location>
        <begin position="497"/>
        <end position="640"/>
    </location>
</feature>
<feature type="domain" description="Death">
    <location>
        <begin position="817"/>
        <end position="897"/>
    </location>
</feature>
<feature type="region of interest" description="Interaction with DCC" evidence="1">
    <location>
        <begin position="661"/>
        <end position="679"/>
    </location>
</feature>
<feature type="site" description="Cleavage; by caspase-3" evidence="19">
    <location>
        <begin position="396"/>
        <end position="397"/>
    </location>
</feature>
<feature type="glycosylation site" description="N-linked (GlcNAc...) asparagine" evidence="4">
    <location>
        <position position="107"/>
    </location>
</feature>
<feature type="glycosylation site" description="N-linked (GlcNAc...) asparagine" evidence="4">
    <location>
        <position position="218"/>
    </location>
</feature>
<feature type="glycosylation site" description="C-linked (Man) tryptophan" evidence="3">
    <location>
        <position position="245"/>
    </location>
</feature>
<feature type="glycosylation site" description="C-linked (Man) tryptophan" evidence="3">
    <location>
        <position position="248"/>
    </location>
</feature>
<feature type="glycosylation site" description="C-linked (Man) tryptophan" evidence="3">
    <location>
        <position position="251"/>
    </location>
</feature>
<feature type="glycosylation site" description="C-linked (Man) tryptophan" evidence="3">
    <location>
        <position position="301"/>
    </location>
</feature>
<feature type="glycosylation site" description="C-linked (Man) tryptophan" evidence="3">
    <location>
        <position position="304"/>
    </location>
</feature>
<feature type="glycosylation site" description="N-linked (GlcNAc...) asparagine" evidence="4">
    <location>
        <position position="343"/>
    </location>
</feature>
<feature type="disulfide bond" evidence="2">
    <location>
        <begin position="65"/>
        <end position="126"/>
    </location>
</feature>
<feature type="disulfide bond" evidence="2">
    <location>
        <begin position="77"/>
        <end position="124"/>
    </location>
</feature>
<feature type="disulfide bond" evidence="2">
    <location>
        <begin position="170"/>
        <end position="221"/>
    </location>
</feature>
<feature type="disulfide bond" evidence="1">
    <location>
        <begin position="254"/>
        <end position="291"/>
    </location>
</feature>
<feature type="disulfide bond" evidence="1">
    <location>
        <begin position="258"/>
        <end position="295"/>
    </location>
</feature>
<feature type="disulfide bond" evidence="1">
    <location>
        <begin position="269"/>
        <end position="281"/>
    </location>
</feature>
<feature type="disulfide bond" evidence="2">
    <location>
        <begin position="310"/>
        <end position="344"/>
    </location>
</feature>
<feature type="disulfide bond" evidence="2">
    <location>
        <begin position="314"/>
        <end position="349"/>
    </location>
</feature>
<feature type="disulfide bond" evidence="2">
    <location>
        <begin position="322"/>
        <end position="334"/>
    </location>
</feature>
<feature type="mutagenesis site" description="Abolishes interaction with PRKCABP." evidence="11">
    <location>
        <begin position="896"/>
        <end position="898"/>
    </location>
</feature>
<comment type="function">
    <text evidence="7 8 10 14 20">Receptor for netrin required for axon guidance (PubMed:10399920, PubMed:9126742). Functions in the netrin signaling pathway and promotes neurite outgrowth in response to NTN1 (PubMed:19755150). Mediates axon repulsion of neuronal growth cones in the developing nervous system in response to netrin (PubMed:10399920). Axon repulsion in growth cones may be mediated by its association with DCC that may trigger signaling for repulsion (PubMed:10399920). It also acts as a dependence receptor required for apoptosis induction when not associated with netrin ligand (PubMed:11387206, PubMed:12598531).</text>
</comment>
<comment type="subunit">
    <text evidence="2 3 7 10 11">Homodimer and homooligomer (PubMed:19755150). Interacts with the cytoplasmic part of DCC (PubMed:10399920). Interacts with MAGED1 (PubMed:12598531). Interacts with PRKCABP, possibly mediating some interaction with PKC (PubMed:14672991). Interacts (via extracellular domain) with FLRT2 (via extracellular domain) (By similarity). Interacts (via extracellular domain) with FLRT3 (via extracellular domain) (By similarity).</text>
</comment>
<comment type="subcellular location">
    <subcellularLocation>
        <location evidence="10 13 14">Cell membrane</location>
        <topology evidence="10 14 18">Single-pass type I membrane protein</topology>
    </subcellularLocation>
    <subcellularLocation>
        <location evidence="12">Membrane raft</location>
    </subcellularLocation>
    <subcellularLocation>
        <location evidence="13">Cell projection</location>
        <location evidence="13">Neuron projection</location>
    </subcellularLocation>
    <text evidence="11">The interaction with PRKCABP regulates its surface expression and leads to its removal from the surface of neurons and growth cones (PubMed:14672991).</text>
</comment>
<comment type="tissue specificity">
    <text evidence="9 14">Mainly expressed in regions of differentiating neurons. Expressed at early stages of neural tube development in the ventral spinal cord. In developing hindbrain, it colocalizes with a number of cranial motor neuron subpopulations from embryonic E11 to E14, while DCC is expressed by motor neurons at E12. Also expressed in non-neural structures, such as the basal plane of the hindbrain and midbrain, in the developing hypothalamus, thalamus and in the pallidum.</text>
</comment>
<comment type="domain">
    <text evidence="10">The ZU5 domain mediates the interaction with MAGED1, which participates in the induction of apoptosis.</text>
</comment>
<comment type="PTM">
    <text evidence="1 11">Phosphorylated on cytoplasmic tyrosine residues (By similarity). Phosphorylated by PKC in vitro.</text>
</comment>
<comment type="PTM">
    <text evidence="8">Proteolytically cleaved by caspases during apoptosis. The cleavage does not take place when the receptor is associated with netrin ligand. Its cleavage by caspases is required to induce apoptosis.</text>
</comment>
<comment type="PTM">
    <text evidence="3">The two extracellular TSRs of UNC5A contain WxxWxxWxxC motifs that can be C-mannosylated on all tryptophans. DPY19L1 preferentially mannosylates the first two tryptophans and DPY19L3 prefers the third. C-mannosylation by DPY19L1 is required for transport of UNC5A from the endoplasmic reticulum to the cell surface.</text>
</comment>
<comment type="similarity">
    <text evidence="18">Belongs to the unc-5 family.</text>
</comment>
<organism>
    <name type="scientific">Rattus norvegicus</name>
    <name type="common">Rat</name>
    <dbReference type="NCBI Taxonomy" id="10116"/>
    <lineage>
        <taxon>Eukaryota</taxon>
        <taxon>Metazoa</taxon>
        <taxon>Chordata</taxon>
        <taxon>Craniata</taxon>
        <taxon>Vertebrata</taxon>
        <taxon>Euteleostomi</taxon>
        <taxon>Mammalia</taxon>
        <taxon>Eutheria</taxon>
        <taxon>Euarchontoglires</taxon>
        <taxon>Glires</taxon>
        <taxon>Rodentia</taxon>
        <taxon>Myomorpha</taxon>
        <taxon>Muroidea</taxon>
        <taxon>Muridae</taxon>
        <taxon>Murinae</taxon>
        <taxon>Rattus</taxon>
    </lineage>
</organism>
<reference key="1">
    <citation type="journal article" date="1997" name="Nature">
        <title>Vertebrate homologues of C. elegans UNC-5 are candidate netrin receptors.</title>
        <authorList>
            <person name="Leonardo E.D."/>
            <person name="Hinck L."/>
            <person name="Masu M."/>
            <person name="Keino-Masu K."/>
            <person name="Ackerman S.L."/>
            <person name="Tessier-Lavigne M."/>
        </authorList>
    </citation>
    <scope>NUCLEOTIDE SEQUENCE [MRNA]</scope>
    <scope>FUNCTION</scope>
    <scope>SUBCELLULAR LOCATION</scope>
    <scope>TISSUE SPECIFICITY</scope>
    <source>
        <tissue>Ventral spinal cord</tissue>
    </source>
</reference>
<reference key="2">
    <citation type="journal article" date="1999" name="Cell">
        <title>A ligand-gated association between cytoplasmic domains of UNC5 and DCC family receptors converts netrin-induced growth cone attraction to repulsion.</title>
        <authorList>
            <person name="Hong K."/>
            <person name="Hinck L."/>
            <person name="Nishiyama M."/>
            <person name="Poo M.-M."/>
            <person name="Tessier-Lavigne M."/>
            <person name="Stein E."/>
        </authorList>
    </citation>
    <scope>FUNCTION</scope>
    <scope>INTERACTION WITH DCC</scope>
</reference>
<reference key="3">
    <citation type="journal article" date="2001" name="Mech. Dev.">
        <title>Expression patterns of the netrin receptor UNC5H1 among developing motor neurons in the embryonic rat hindbrain.</title>
        <authorList>
            <person name="Barrett C."/>
            <person name="Guthrie S."/>
        </authorList>
    </citation>
    <scope>TISSUE SPECIFICITY</scope>
</reference>
<reference key="4">
    <citation type="journal article" date="2001" name="EMBO J.">
        <title>Netrin-1 acts as a survival factor via its receptors UNC5H and DCC.</title>
        <authorList>
            <person name="Llambi F."/>
            <person name="Causeret F."/>
            <person name="Bloch-Gallego E."/>
            <person name="Mehlen P."/>
        </authorList>
    </citation>
    <scope>FUNCTION</scope>
    <scope>PROTEOLYTIC CLEAVAGE</scope>
</reference>
<reference key="5">
    <citation type="journal article" date="2003" name="J. Biol. Chem.">
        <title>UNC5H1 induces apoptosis via its juxtamembrane region through an interaction with NRAGE.</title>
        <authorList>
            <person name="Williams M.E."/>
            <person name="Strickland P."/>
            <person name="Watanabe K."/>
            <person name="Hinck L."/>
        </authorList>
    </citation>
    <scope>FUNCTION</scope>
    <scope>SUBCELLULAR LOCATION</scope>
    <scope>INTERACTION WITH MAGED1</scope>
    <scope>DOMAIN</scope>
</reference>
<reference key="6">
    <citation type="journal article" date="2003" name="J. Neurosci.">
        <title>Surface expression of the netrin receptor UNC5H1 is regulated through a protein kinase C-interacting protein/protein kinase-dependent mechanism.</title>
        <authorList>
            <person name="Williams M.E."/>
            <person name="Wu S.C.-Y."/>
            <person name="McKenna W.L."/>
            <person name="Hinck L."/>
        </authorList>
    </citation>
    <scope>INTERACTION WITH PRKCABP</scope>
    <scope>PHOSPHORYLATION</scope>
    <scope>MUTAGENESIS OF 896-ALA--CYS-898</scope>
</reference>
<reference key="7">
    <citation type="journal article" date="2008" name="Exp. Cell Res.">
        <title>Lipid raft localization and palmitoylation: identification of two requirements for cell death induction by the tumor suppressors UNC5H.</title>
        <authorList>
            <person name="Maisse C."/>
            <person name="Rossin A."/>
            <person name="Cahuzac N."/>
            <person name="Paradisi A."/>
            <person name="Klein C."/>
            <person name="Haillot M.L."/>
            <person name="Herincs Z."/>
            <person name="Mehlen P."/>
            <person name="Hueber A.O."/>
        </authorList>
    </citation>
    <scope>SUBCELLULAR LOCATION</scope>
</reference>
<reference key="8">
    <citation type="journal article" date="2009" name="Cell. Signal.">
        <title>Spatial and temporal activation of the small GTPases RhoA and Rac1 by the netrin-1 receptor UNC5a during neurite outgrowth.</title>
        <authorList>
            <person name="Picard M."/>
            <person name="Petrie R.J."/>
            <person name="Antoine-Bertrand J."/>
            <person name="Saint-Cyr-Proulx E."/>
            <person name="Villemure J.F."/>
            <person name="Lamarche-Vane N."/>
        </authorList>
    </citation>
    <scope>FUNCTION</scope>
    <scope>SUBUNIT</scope>
    <scope>SUBCELLULAR LOCATION</scope>
</reference>
<dbReference type="EMBL" id="U87305">
    <property type="protein sequence ID" value="AAB57678.1"/>
    <property type="molecule type" value="mRNA"/>
</dbReference>
<dbReference type="RefSeq" id="NP_071542.1">
    <property type="nucleotide sequence ID" value="NM_022206.1"/>
</dbReference>
<dbReference type="SMR" id="O08721"/>
<dbReference type="BioGRID" id="248879">
    <property type="interactions" value="1"/>
</dbReference>
<dbReference type="DIP" id="DIP-60742N"/>
<dbReference type="FunCoup" id="O08721">
    <property type="interactions" value="1906"/>
</dbReference>
<dbReference type="IntAct" id="O08721">
    <property type="interactions" value="1"/>
</dbReference>
<dbReference type="STRING" id="10116.ENSRNOP00000071115"/>
<dbReference type="GlyCosmos" id="O08721">
    <property type="glycosylation" value="3 sites, No reported glycans"/>
</dbReference>
<dbReference type="GlyGen" id="O08721">
    <property type="glycosylation" value="8 sites"/>
</dbReference>
<dbReference type="iPTMnet" id="O08721"/>
<dbReference type="PhosphoSitePlus" id="O08721"/>
<dbReference type="PaxDb" id="10116-ENSRNOP00000032250"/>
<dbReference type="GeneID" id="60629"/>
<dbReference type="KEGG" id="rno:60629"/>
<dbReference type="UCSC" id="RGD:621755">
    <property type="organism name" value="rat"/>
</dbReference>
<dbReference type="AGR" id="RGD:621755"/>
<dbReference type="CTD" id="90249"/>
<dbReference type="RGD" id="621755">
    <property type="gene designation" value="Unc5a"/>
</dbReference>
<dbReference type="eggNOG" id="KOG1480">
    <property type="taxonomic scope" value="Eukaryota"/>
</dbReference>
<dbReference type="InParanoid" id="O08721"/>
<dbReference type="PhylomeDB" id="O08721"/>
<dbReference type="Reactome" id="R-RNO-373752">
    <property type="pathway name" value="Netrin-1 signaling"/>
</dbReference>
<dbReference type="PRO" id="PR:O08721"/>
<dbReference type="Proteomes" id="UP000002494">
    <property type="component" value="Unplaced"/>
</dbReference>
<dbReference type="GO" id="GO:0045121">
    <property type="term" value="C:membrane raft"/>
    <property type="evidence" value="ECO:0007669"/>
    <property type="project" value="UniProtKB-SubCell"/>
</dbReference>
<dbReference type="GO" id="GO:0032589">
    <property type="term" value="C:neuron projection membrane"/>
    <property type="evidence" value="ECO:0000315"/>
    <property type="project" value="UniProtKB"/>
</dbReference>
<dbReference type="GO" id="GO:0032809">
    <property type="term" value="C:neuronal cell body membrane"/>
    <property type="evidence" value="ECO:0000315"/>
    <property type="project" value="UniProtKB"/>
</dbReference>
<dbReference type="GO" id="GO:0005886">
    <property type="term" value="C:plasma membrane"/>
    <property type="evidence" value="ECO:0000314"/>
    <property type="project" value="UniProtKB"/>
</dbReference>
<dbReference type="GO" id="GO:0005042">
    <property type="term" value="F:netrin receptor activity"/>
    <property type="evidence" value="ECO:0000314"/>
    <property type="project" value="RGD"/>
</dbReference>
<dbReference type="GO" id="GO:0033564">
    <property type="term" value="P:anterior/posterior axon guidance"/>
    <property type="evidence" value="ECO:0000266"/>
    <property type="project" value="RGD"/>
</dbReference>
<dbReference type="GO" id="GO:0006915">
    <property type="term" value="P:apoptotic process"/>
    <property type="evidence" value="ECO:0007669"/>
    <property type="project" value="UniProtKB-KW"/>
</dbReference>
<dbReference type="GO" id="GO:0007411">
    <property type="term" value="P:axon guidance"/>
    <property type="evidence" value="ECO:0000314"/>
    <property type="project" value="RGD"/>
</dbReference>
<dbReference type="GO" id="GO:0038007">
    <property type="term" value="P:netrin-activated signaling pathway"/>
    <property type="evidence" value="ECO:0000315"/>
    <property type="project" value="UniProtKB"/>
</dbReference>
<dbReference type="GO" id="GO:0031175">
    <property type="term" value="P:neuron projection development"/>
    <property type="evidence" value="ECO:0000315"/>
    <property type="project" value="UniProtKB"/>
</dbReference>
<dbReference type="CDD" id="cd08800">
    <property type="entry name" value="Death_UNC5A"/>
    <property type="match status" value="1"/>
</dbReference>
<dbReference type="FunFam" id="1.10.533.10:FF:000001">
    <property type="entry name" value="Unc-5 netrin receptor B"/>
    <property type="match status" value="1"/>
</dbReference>
<dbReference type="FunFam" id="2.20.100.10:FF:000002">
    <property type="entry name" value="Unc-5 netrin receptor C"/>
    <property type="match status" value="1"/>
</dbReference>
<dbReference type="FunFam" id="2.20.100.10:FF:000008">
    <property type="entry name" value="Unc-5 netrin receptor C"/>
    <property type="match status" value="1"/>
</dbReference>
<dbReference type="FunFam" id="2.60.220.30:FF:000003">
    <property type="entry name" value="Unc-5 netrin receptor C"/>
    <property type="match status" value="1"/>
</dbReference>
<dbReference type="FunFam" id="2.60.40.10:FF:000037">
    <property type="entry name" value="Unc-5 netrin receptor C"/>
    <property type="match status" value="1"/>
</dbReference>
<dbReference type="FunFam" id="2.60.40.10:FF:000039">
    <property type="entry name" value="Unc-5 netrin receptor C"/>
    <property type="match status" value="1"/>
</dbReference>
<dbReference type="Gene3D" id="2.60.220.30">
    <property type="match status" value="1"/>
</dbReference>
<dbReference type="Gene3D" id="1.10.533.10">
    <property type="entry name" value="Death Domain, Fas"/>
    <property type="match status" value="1"/>
</dbReference>
<dbReference type="Gene3D" id="2.60.40.10">
    <property type="entry name" value="Immunoglobulins"/>
    <property type="match status" value="2"/>
</dbReference>
<dbReference type="Gene3D" id="2.20.100.10">
    <property type="entry name" value="Thrombospondin type-1 (TSP1) repeat"/>
    <property type="match status" value="2"/>
</dbReference>
<dbReference type="InterPro" id="IPR011029">
    <property type="entry name" value="DEATH-like_dom_sf"/>
</dbReference>
<dbReference type="InterPro" id="IPR000488">
    <property type="entry name" value="Death_dom"/>
</dbReference>
<dbReference type="InterPro" id="IPR042155">
    <property type="entry name" value="Death_UNC5A"/>
</dbReference>
<dbReference type="InterPro" id="IPR007110">
    <property type="entry name" value="Ig-like_dom"/>
</dbReference>
<dbReference type="InterPro" id="IPR036179">
    <property type="entry name" value="Ig-like_dom_sf"/>
</dbReference>
<dbReference type="InterPro" id="IPR013783">
    <property type="entry name" value="Ig-like_fold"/>
</dbReference>
<dbReference type="InterPro" id="IPR013098">
    <property type="entry name" value="Ig_I-set"/>
</dbReference>
<dbReference type="InterPro" id="IPR003599">
    <property type="entry name" value="Ig_sub"/>
</dbReference>
<dbReference type="InterPro" id="IPR000884">
    <property type="entry name" value="TSP1_rpt"/>
</dbReference>
<dbReference type="InterPro" id="IPR036383">
    <property type="entry name" value="TSP1_rpt_sf"/>
</dbReference>
<dbReference type="InterPro" id="IPR037936">
    <property type="entry name" value="UNC5"/>
</dbReference>
<dbReference type="InterPro" id="IPR033772">
    <property type="entry name" value="UPA"/>
</dbReference>
<dbReference type="InterPro" id="IPR000906">
    <property type="entry name" value="ZU5_dom"/>
</dbReference>
<dbReference type="PANTHER" id="PTHR12582">
    <property type="entry name" value="NETRIN RECEPTOR UNC5"/>
    <property type="match status" value="1"/>
</dbReference>
<dbReference type="PANTHER" id="PTHR12582:SF4">
    <property type="entry name" value="NETRIN RECEPTOR UNC5A"/>
    <property type="match status" value="1"/>
</dbReference>
<dbReference type="Pfam" id="PF00531">
    <property type="entry name" value="Death"/>
    <property type="match status" value="1"/>
</dbReference>
<dbReference type="Pfam" id="PF07679">
    <property type="entry name" value="I-set"/>
    <property type="match status" value="1"/>
</dbReference>
<dbReference type="Pfam" id="PF00090">
    <property type="entry name" value="TSP_1"/>
    <property type="match status" value="2"/>
</dbReference>
<dbReference type="Pfam" id="PF17217">
    <property type="entry name" value="UPA"/>
    <property type="match status" value="1"/>
</dbReference>
<dbReference type="Pfam" id="PF00791">
    <property type="entry name" value="ZU5"/>
    <property type="match status" value="1"/>
</dbReference>
<dbReference type="PRINTS" id="PR01705">
    <property type="entry name" value="TSP1REPEAT"/>
</dbReference>
<dbReference type="SMART" id="SM00005">
    <property type="entry name" value="DEATH"/>
    <property type="match status" value="1"/>
</dbReference>
<dbReference type="SMART" id="SM00409">
    <property type="entry name" value="IG"/>
    <property type="match status" value="1"/>
</dbReference>
<dbReference type="SMART" id="SM00209">
    <property type="entry name" value="TSP1"/>
    <property type="match status" value="2"/>
</dbReference>
<dbReference type="SMART" id="SM00218">
    <property type="entry name" value="ZU5"/>
    <property type="match status" value="1"/>
</dbReference>
<dbReference type="SUPFAM" id="SSF47986">
    <property type="entry name" value="DEATH domain"/>
    <property type="match status" value="1"/>
</dbReference>
<dbReference type="SUPFAM" id="SSF48726">
    <property type="entry name" value="Immunoglobulin"/>
    <property type="match status" value="2"/>
</dbReference>
<dbReference type="SUPFAM" id="SSF82895">
    <property type="entry name" value="TSP-1 type 1 repeat"/>
    <property type="match status" value="2"/>
</dbReference>
<dbReference type="PROSITE" id="PS50835">
    <property type="entry name" value="IG_LIKE"/>
    <property type="match status" value="1"/>
</dbReference>
<dbReference type="PROSITE" id="PS50092">
    <property type="entry name" value="TSP1"/>
    <property type="match status" value="2"/>
</dbReference>
<dbReference type="PROSITE" id="PS51145">
    <property type="entry name" value="ZU5"/>
    <property type="match status" value="1"/>
</dbReference>
<proteinExistence type="evidence at protein level"/>
<name>UNC5A_RAT</name>
<protein>
    <recommendedName>
        <fullName>Netrin receptor UNC5A</fullName>
    </recommendedName>
    <alternativeName>
        <fullName>Protein unc-5 homolog 1</fullName>
    </alternativeName>
    <alternativeName>
        <fullName>Protein unc-5 homolog A</fullName>
    </alternativeName>
</protein>